<proteinExistence type="inferred from homology"/>
<comment type="function">
    <text evidence="1">NADPH-dependent reductase which is a central component of the cytosolic iron-sulfur (Fe-S) protein assembly (CIA) machinery. Transfers electrons from NADPH via its FAD and FMN prosthetic groups to the [2Fe-2S] cluster of DRE2, another key component of the CIA machinery. In turn, this reduced cluster provides electrons for assembly of cytosolic iron-sulfur cluster proteins. Positively controls H(2)O(2)-induced cell death.</text>
</comment>
<comment type="catalytic activity">
    <reaction evidence="1">
        <text>2 oxidized [2Fe-2S]-[protein] + NADPH = 2 reduced [2Fe-2S]-[protein] + NADP(+) + H(+)</text>
        <dbReference type="Rhea" id="RHEA:67716"/>
        <dbReference type="Rhea" id="RHEA-COMP:17327"/>
        <dbReference type="Rhea" id="RHEA-COMP:17328"/>
        <dbReference type="ChEBI" id="CHEBI:15378"/>
        <dbReference type="ChEBI" id="CHEBI:33737"/>
        <dbReference type="ChEBI" id="CHEBI:33738"/>
        <dbReference type="ChEBI" id="CHEBI:57783"/>
        <dbReference type="ChEBI" id="CHEBI:58349"/>
    </reaction>
    <physiologicalReaction direction="left-to-right" evidence="1">
        <dbReference type="Rhea" id="RHEA:67717"/>
    </physiologicalReaction>
</comment>
<comment type="cofactor">
    <cofactor evidence="1">
        <name>FAD</name>
        <dbReference type="ChEBI" id="CHEBI:57692"/>
    </cofactor>
</comment>
<comment type="cofactor">
    <cofactor evidence="1">
        <name>FMN</name>
        <dbReference type="ChEBI" id="CHEBI:58210"/>
    </cofactor>
</comment>
<comment type="subunit">
    <text evidence="1">Interacts with DRE2; as part of the cytosolic iron-sulfur (Fe-S) protein assembly (CIA) machinery.</text>
</comment>
<comment type="subcellular location">
    <subcellularLocation>
        <location evidence="1">Cytoplasm</location>
    </subcellularLocation>
    <subcellularLocation>
        <location evidence="1">Mitochondrion</location>
    </subcellularLocation>
    <text evidence="1">Relocalizes to mitochondria after H(2)O(2) exposure.</text>
</comment>
<comment type="similarity">
    <text evidence="1">Belongs to the NADPH-dependent diflavin oxidoreductase NDOR1 family.</text>
</comment>
<comment type="similarity">
    <text evidence="1">In the N-terminal section; belongs to the flavodoxin family.</text>
</comment>
<comment type="similarity">
    <text evidence="1">In the C-terminal section; belongs to the flavoprotein pyridine nucleotide cytochrome reductase family.</text>
</comment>
<accession>Q6BR77</accession>
<accession>B5RTM4</accession>
<keyword id="KW-0963">Cytoplasm</keyword>
<keyword id="KW-0274">FAD</keyword>
<keyword id="KW-0285">Flavoprotein</keyword>
<keyword id="KW-0288">FMN</keyword>
<keyword id="KW-0496">Mitochondrion</keyword>
<keyword id="KW-0521">NADP</keyword>
<keyword id="KW-0560">Oxidoreductase</keyword>
<keyword id="KW-1185">Reference proteome</keyword>
<feature type="chain" id="PRO_0000167617" description="NADPH-dependent diflavin oxidoreductase 1">
    <location>
        <begin position="1"/>
        <end position="603"/>
    </location>
</feature>
<feature type="domain" description="Flavodoxin-like" evidence="1">
    <location>
        <begin position="10"/>
        <end position="155"/>
    </location>
</feature>
<feature type="domain" description="FAD-binding FR-type" evidence="1">
    <location>
        <begin position="209"/>
        <end position="451"/>
    </location>
</feature>
<feature type="binding site" evidence="1">
    <location>
        <begin position="16"/>
        <end position="21"/>
    </location>
    <ligand>
        <name>FMN</name>
        <dbReference type="ChEBI" id="CHEBI:58210"/>
    </ligand>
</feature>
<feature type="binding site" evidence="1">
    <location>
        <begin position="64"/>
        <end position="67"/>
    </location>
    <ligand>
        <name>FMN</name>
        <dbReference type="ChEBI" id="CHEBI:58210"/>
    </ligand>
</feature>
<feature type="binding site" evidence="1">
    <location>
        <begin position="102"/>
        <end position="111"/>
    </location>
    <ligand>
        <name>FMN</name>
        <dbReference type="ChEBI" id="CHEBI:58210"/>
    </ligand>
</feature>
<feature type="binding site" evidence="1">
    <location>
        <position position="137"/>
    </location>
    <ligand>
        <name>FMN</name>
        <dbReference type="ChEBI" id="CHEBI:58210"/>
    </ligand>
</feature>
<feature type="binding site" evidence="1">
    <location>
        <position position="359"/>
    </location>
    <ligand>
        <name>FAD</name>
        <dbReference type="ChEBI" id="CHEBI:57692"/>
    </ligand>
</feature>
<feature type="binding site" evidence="1">
    <location>
        <begin position="390"/>
        <end position="393"/>
    </location>
    <ligand>
        <name>FAD</name>
        <dbReference type="ChEBI" id="CHEBI:57692"/>
    </ligand>
</feature>
<feature type="binding site" evidence="1">
    <location>
        <begin position="422"/>
        <end position="425"/>
    </location>
    <ligand>
        <name>FAD</name>
        <dbReference type="ChEBI" id="CHEBI:57692"/>
    </ligand>
</feature>
<feature type="binding site" evidence="1">
    <location>
        <position position="465"/>
    </location>
    <ligand>
        <name>NADP(+)</name>
        <dbReference type="ChEBI" id="CHEBI:58349"/>
    </ligand>
</feature>
<feature type="binding site" evidence="1">
    <location>
        <begin position="521"/>
        <end position="522"/>
    </location>
    <ligand>
        <name>NADP(+)</name>
        <dbReference type="ChEBI" id="CHEBI:58349"/>
    </ligand>
</feature>
<feature type="binding site" evidence="1">
    <location>
        <position position="603"/>
    </location>
    <ligand>
        <name>FAD</name>
        <dbReference type="ChEBI" id="CHEBI:57692"/>
    </ligand>
</feature>
<dbReference type="EC" id="1.18.1.-" evidence="1"/>
<dbReference type="EMBL" id="CR382136">
    <property type="protein sequence ID" value="CAR65709.1"/>
    <property type="molecule type" value="Genomic_DNA"/>
</dbReference>
<dbReference type="RefSeq" id="XP_002770355.1">
    <property type="nucleotide sequence ID" value="XM_002770309.1"/>
</dbReference>
<dbReference type="SMR" id="Q6BR77"/>
<dbReference type="FunCoup" id="Q6BR77">
    <property type="interactions" value="770"/>
</dbReference>
<dbReference type="STRING" id="284592.Q6BR77"/>
<dbReference type="GeneID" id="8998577"/>
<dbReference type="KEGG" id="dha:DEHA2D18590g"/>
<dbReference type="VEuPathDB" id="FungiDB:DEHA2D18590g"/>
<dbReference type="eggNOG" id="KOG1159">
    <property type="taxonomic scope" value="Eukaryota"/>
</dbReference>
<dbReference type="HOGENOM" id="CLU_001570_17_6_1"/>
<dbReference type="InParanoid" id="Q6BR77"/>
<dbReference type="OMA" id="DIMSIPR"/>
<dbReference type="OrthoDB" id="1856718at2759"/>
<dbReference type="Proteomes" id="UP000000599">
    <property type="component" value="Chromosome D"/>
</dbReference>
<dbReference type="GO" id="GO:0097361">
    <property type="term" value="C:cytosolic [4Fe-4S] assembly targeting complex"/>
    <property type="evidence" value="ECO:0007669"/>
    <property type="project" value="EnsemblFungi"/>
</dbReference>
<dbReference type="GO" id="GO:0005739">
    <property type="term" value="C:mitochondrion"/>
    <property type="evidence" value="ECO:0007669"/>
    <property type="project" value="UniProtKB-SubCell"/>
</dbReference>
<dbReference type="GO" id="GO:0050660">
    <property type="term" value="F:flavin adenine dinucleotide binding"/>
    <property type="evidence" value="ECO:0007669"/>
    <property type="project" value="UniProtKB-UniRule"/>
</dbReference>
<dbReference type="GO" id="GO:0010181">
    <property type="term" value="F:FMN binding"/>
    <property type="evidence" value="ECO:0007669"/>
    <property type="project" value="UniProtKB-UniRule"/>
</dbReference>
<dbReference type="GO" id="GO:0050661">
    <property type="term" value="F:NADP binding"/>
    <property type="evidence" value="ECO:0007669"/>
    <property type="project" value="UniProtKB-UniRule"/>
</dbReference>
<dbReference type="GO" id="GO:0003958">
    <property type="term" value="F:NADPH-hemoprotein reductase activity"/>
    <property type="evidence" value="ECO:0007669"/>
    <property type="project" value="InterPro"/>
</dbReference>
<dbReference type="GO" id="GO:0034599">
    <property type="term" value="P:cellular response to oxidative stress"/>
    <property type="evidence" value="ECO:0007669"/>
    <property type="project" value="EnsemblFungi"/>
</dbReference>
<dbReference type="GO" id="GO:0016226">
    <property type="term" value="P:iron-sulfur cluster assembly"/>
    <property type="evidence" value="ECO:0007669"/>
    <property type="project" value="UniProtKB-UniRule"/>
</dbReference>
<dbReference type="GO" id="GO:0006809">
    <property type="term" value="P:nitric oxide biosynthetic process"/>
    <property type="evidence" value="ECO:0007669"/>
    <property type="project" value="EnsemblFungi"/>
</dbReference>
<dbReference type="GO" id="GO:0045429">
    <property type="term" value="P:positive regulation of nitric oxide biosynthetic process"/>
    <property type="evidence" value="ECO:0007669"/>
    <property type="project" value="EnsemblFungi"/>
</dbReference>
<dbReference type="FunFam" id="3.40.50.80:FF:000030">
    <property type="entry name" value="NADPH-dependent diflavin oxidoreductase 1"/>
    <property type="match status" value="1"/>
</dbReference>
<dbReference type="Gene3D" id="3.40.50.360">
    <property type="match status" value="1"/>
</dbReference>
<dbReference type="Gene3D" id="1.20.990.10">
    <property type="entry name" value="NADPH-cytochrome p450 Reductase, Chain A, domain 3"/>
    <property type="match status" value="1"/>
</dbReference>
<dbReference type="Gene3D" id="3.40.50.80">
    <property type="entry name" value="Nucleotide-binding domain of ferredoxin-NADP reductase (FNR) module"/>
    <property type="match status" value="1"/>
</dbReference>
<dbReference type="Gene3D" id="2.40.30.10">
    <property type="entry name" value="Translation factors"/>
    <property type="match status" value="1"/>
</dbReference>
<dbReference type="HAMAP" id="MF_03178">
    <property type="entry name" value="NDOR1"/>
    <property type="match status" value="1"/>
</dbReference>
<dbReference type="InterPro" id="IPR003097">
    <property type="entry name" value="CysJ-like_FAD-binding"/>
</dbReference>
<dbReference type="InterPro" id="IPR017927">
    <property type="entry name" value="FAD-bd_FR_type"/>
</dbReference>
<dbReference type="InterPro" id="IPR001094">
    <property type="entry name" value="Flavdoxin-like"/>
</dbReference>
<dbReference type="InterPro" id="IPR008254">
    <property type="entry name" value="Flavodoxin/NO_synth"/>
</dbReference>
<dbReference type="InterPro" id="IPR001709">
    <property type="entry name" value="Flavoprot_Pyr_Nucl_cyt_Rdtase"/>
</dbReference>
<dbReference type="InterPro" id="IPR029039">
    <property type="entry name" value="Flavoprotein-like_sf"/>
</dbReference>
<dbReference type="InterPro" id="IPR039261">
    <property type="entry name" value="FNR_nucleotide-bd"/>
</dbReference>
<dbReference type="InterPro" id="IPR023173">
    <property type="entry name" value="NADPH_Cyt_P450_Rdtase_alpha"/>
</dbReference>
<dbReference type="InterPro" id="IPR028879">
    <property type="entry name" value="NDOR1"/>
</dbReference>
<dbReference type="InterPro" id="IPR001433">
    <property type="entry name" value="OxRdtase_FAD/NAD-bd"/>
</dbReference>
<dbReference type="InterPro" id="IPR017938">
    <property type="entry name" value="Riboflavin_synthase-like_b-brl"/>
</dbReference>
<dbReference type="PANTHER" id="PTHR19384:SF10">
    <property type="entry name" value="NADPH-DEPENDENT DIFLAVIN OXIDOREDUCTASE 1"/>
    <property type="match status" value="1"/>
</dbReference>
<dbReference type="PANTHER" id="PTHR19384">
    <property type="entry name" value="NITRIC OXIDE SYNTHASE-RELATED"/>
    <property type="match status" value="1"/>
</dbReference>
<dbReference type="Pfam" id="PF00667">
    <property type="entry name" value="FAD_binding_1"/>
    <property type="match status" value="1"/>
</dbReference>
<dbReference type="Pfam" id="PF00258">
    <property type="entry name" value="Flavodoxin_1"/>
    <property type="match status" value="1"/>
</dbReference>
<dbReference type="Pfam" id="PF00175">
    <property type="entry name" value="NAD_binding_1"/>
    <property type="match status" value="1"/>
</dbReference>
<dbReference type="PRINTS" id="PR00369">
    <property type="entry name" value="FLAVODOXIN"/>
</dbReference>
<dbReference type="PRINTS" id="PR00371">
    <property type="entry name" value="FPNCR"/>
</dbReference>
<dbReference type="SUPFAM" id="SSF52343">
    <property type="entry name" value="Ferredoxin reductase-like, C-terminal NADP-linked domain"/>
    <property type="match status" value="1"/>
</dbReference>
<dbReference type="SUPFAM" id="SSF52218">
    <property type="entry name" value="Flavoproteins"/>
    <property type="match status" value="1"/>
</dbReference>
<dbReference type="SUPFAM" id="SSF63380">
    <property type="entry name" value="Riboflavin synthase domain-like"/>
    <property type="match status" value="1"/>
</dbReference>
<dbReference type="PROSITE" id="PS51384">
    <property type="entry name" value="FAD_FR"/>
    <property type="match status" value="1"/>
</dbReference>
<dbReference type="PROSITE" id="PS50902">
    <property type="entry name" value="FLAVODOXIN_LIKE"/>
    <property type="match status" value="1"/>
</dbReference>
<organism>
    <name type="scientific">Debaryomyces hansenii (strain ATCC 36239 / CBS 767 / BCRC 21394 / JCM 1990 / NBRC 0083 / IGC 2968)</name>
    <name type="common">Yeast</name>
    <name type="synonym">Torulaspora hansenii</name>
    <dbReference type="NCBI Taxonomy" id="284592"/>
    <lineage>
        <taxon>Eukaryota</taxon>
        <taxon>Fungi</taxon>
        <taxon>Dikarya</taxon>
        <taxon>Ascomycota</taxon>
        <taxon>Saccharomycotina</taxon>
        <taxon>Pichiomycetes</taxon>
        <taxon>Debaryomycetaceae</taxon>
        <taxon>Debaryomyces</taxon>
    </lineage>
</organism>
<name>NDOR1_DEBHA</name>
<protein>
    <recommendedName>
        <fullName evidence="1">NADPH-dependent diflavin oxidoreductase 1</fullName>
        <ecNumber evidence="1">1.18.1.-</ecNumber>
    </recommendedName>
    <alternativeName>
        <fullName evidence="1">NADPH-dependent FMN and FAD-containing oxidoreductase</fullName>
    </alternativeName>
</protein>
<gene>
    <name evidence="1" type="primary">TAH18</name>
    <name type="ordered locus">DEHA2D18590g</name>
</gene>
<reference key="1">
    <citation type="journal article" date="2004" name="Nature">
        <title>Genome evolution in yeasts.</title>
        <authorList>
            <person name="Dujon B."/>
            <person name="Sherman D."/>
            <person name="Fischer G."/>
            <person name="Durrens P."/>
            <person name="Casaregola S."/>
            <person name="Lafontaine I."/>
            <person name="de Montigny J."/>
            <person name="Marck C."/>
            <person name="Neuveglise C."/>
            <person name="Talla E."/>
            <person name="Goffard N."/>
            <person name="Frangeul L."/>
            <person name="Aigle M."/>
            <person name="Anthouard V."/>
            <person name="Babour A."/>
            <person name="Barbe V."/>
            <person name="Barnay S."/>
            <person name="Blanchin S."/>
            <person name="Beckerich J.-M."/>
            <person name="Beyne E."/>
            <person name="Bleykasten C."/>
            <person name="Boisrame A."/>
            <person name="Boyer J."/>
            <person name="Cattolico L."/>
            <person name="Confanioleri F."/>
            <person name="de Daruvar A."/>
            <person name="Despons L."/>
            <person name="Fabre E."/>
            <person name="Fairhead C."/>
            <person name="Ferry-Dumazet H."/>
            <person name="Groppi A."/>
            <person name="Hantraye F."/>
            <person name="Hennequin C."/>
            <person name="Jauniaux N."/>
            <person name="Joyet P."/>
            <person name="Kachouri R."/>
            <person name="Kerrest A."/>
            <person name="Koszul R."/>
            <person name="Lemaire M."/>
            <person name="Lesur I."/>
            <person name="Ma L."/>
            <person name="Muller H."/>
            <person name="Nicaud J.-M."/>
            <person name="Nikolski M."/>
            <person name="Oztas S."/>
            <person name="Ozier-Kalogeropoulos O."/>
            <person name="Pellenz S."/>
            <person name="Potier S."/>
            <person name="Richard G.-F."/>
            <person name="Straub M.-L."/>
            <person name="Suleau A."/>
            <person name="Swennen D."/>
            <person name="Tekaia F."/>
            <person name="Wesolowski-Louvel M."/>
            <person name="Westhof E."/>
            <person name="Wirth B."/>
            <person name="Zeniou-Meyer M."/>
            <person name="Zivanovic Y."/>
            <person name="Bolotin-Fukuhara M."/>
            <person name="Thierry A."/>
            <person name="Bouchier C."/>
            <person name="Caudron B."/>
            <person name="Scarpelli C."/>
            <person name="Gaillardin C."/>
            <person name="Weissenbach J."/>
            <person name="Wincker P."/>
            <person name="Souciet J.-L."/>
        </authorList>
    </citation>
    <scope>NUCLEOTIDE SEQUENCE [LARGE SCALE GENOMIC DNA]</scope>
    <source>
        <strain>ATCC 36239 / CBS 767 / BCRC 21394 / JCM 1990 / NBRC 0083 / IGC 2968</strain>
    </source>
</reference>
<evidence type="ECO:0000255" key="1">
    <source>
        <dbReference type="HAMAP-Rule" id="MF_03178"/>
    </source>
</evidence>
<sequence length="603" mass="68498">MSGISELSGVTILYGSETGNAQDYALFLAKRLKYFGLKPSVVSLDHYPLKNLVTDTKYLIVICSTTGQGELPRNSKKFMKFILKKKLPTDLLNHIELTTFGIGDSSYPKFNYAIKKIHARLLQLGCSELCTRCEADEQTPEGVDGYYSEWETNLLEALKSKIHGIPLTYDETVLLPADNPVEVSSNESDVPTSNSPTELSLTRMGDGSTNLLLGSVKANKRITKEGHFQDVRHLIIEGENLSYIPGDTLALYPSNDNESVETLIQSQPHWIPIADKPLLIHGEIPFVEGGLIDKSKLTLRSLITHHLDIISIPRRSFFMTLAHFSDSTTEDGEREQEKLREFSKIEESEELYNYANRPRRSILETILEFQQNLTIPVEYILDLFPIIKPRLFSIASRPSPNSVELIVAVVVYKTILRRVRRGLCTKWIKSLQDNDRIVFSIHKSNLKFELPTTKYPPILMVSPGTGVAPMKSLIEHITSLGIQQHLYLFYGCRNKENDYLFGDLWASLKSQNKLSIYPCFSRDQDSKIKYVQHKIYEQHELVGDLILNQNAIVFICGSSGAMPREVRITLVEILMKFGKMKDTEADDYLMDMENGGRYLQETW</sequence>